<accession>B9LKK0</accession>
<keyword id="KW-0963">Cytoplasm</keyword>
<keyword id="KW-0489">Methyltransferase</keyword>
<keyword id="KW-0698">rRNA processing</keyword>
<keyword id="KW-0949">S-adenosyl-L-methionine</keyword>
<keyword id="KW-0808">Transferase</keyword>
<comment type="function">
    <text evidence="1">Specifically methylates the N4 position of cytidine in position 1402 (C1402) of 16S rRNA.</text>
</comment>
<comment type="catalytic activity">
    <reaction evidence="1">
        <text>cytidine(1402) in 16S rRNA + S-adenosyl-L-methionine = N(4)-methylcytidine(1402) in 16S rRNA + S-adenosyl-L-homocysteine + H(+)</text>
        <dbReference type="Rhea" id="RHEA:42928"/>
        <dbReference type="Rhea" id="RHEA-COMP:10286"/>
        <dbReference type="Rhea" id="RHEA-COMP:10287"/>
        <dbReference type="ChEBI" id="CHEBI:15378"/>
        <dbReference type="ChEBI" id="CHEBI:57856"/>
        <dbReference type="ChEBI" id="CHEBI:59789"/>
        <dbReference type="ChEBI" id="CHEBI:74506"/>
        <dbReference type="ChEBI" id="CHEBI:82748"/>
        <dbReference type="EC" id="2.1.1.199"/>
    </reaction>
</comment>
<comment type="subcellular location">
    <subcellularLocation>
        <location evidence="1">Cytoplasm</location>
    </subcellularLocation>
</comment>
<comment type="similarity">
    <text evidence="1">Belongs to the methyltransferase superfamily. RsmH family.</text>
</comment>
<evidence type="ECO:0000255" key="1">
    <source>
        <dbReference type="HAMAP-Rule" id="MF_01007"/>
    </source>
</evidence>
<dbReference type="EC" id="2.1.1.199" evidence="1"/>
<dbReference type="EMBL" id="CP001364">
    <property type="protein sequence ID" value="ACM52256.1"/>
    <property type="molecule type" value="Genomic_DNA"/>
</dbReference>
<dbReference type="SMR" id="B9LKK0"/>
<dbReference type="KEGG" id="chl:Chy400_0827"/>
<dbReference type="HOGENOM" id="CLU_038422_3_0_0"/>
<dbReference type="OrthoDB" id="9806637at2"/>
<dbReference type="GO" id="GO:0005737">
    <property type="term" value="C:cytoplasm"/>
    <property type="evidence" value="ECO:0007669"/>
    <property type="project" value="UniProtKB-SubCell"/>
</dbReference>
<dbReference type="GO" id="GO:0071424">
    <property type="term" value="F:rRNA (cytosine-N4-)-methyltransferase activity"/>
    <property type="evidence" value="ECO:0007669"/>
    <property type="project" value="UniProtKB-UniRule"/>
</dbReference>
<dbReference type="GO" id="GO:0070475">
    <property type="term" value="P:rRNA base methylation"/>
    <property type="evidence" value="ECO:0007669"/>
    <property type="project" value="UniProtKB-UniRule"/>
</dbReference>
<dbReference type="FunFam" id="1.10.150.170:FF:000003">
    <property type="entry name" value="Ribosomal RNA small subunit methyltransferase H"/>
    <property type="match status" value="1"/>
</dbReference>
<dbReference type="Gene3D" id="1.10.150.170">
    <property type="entry name" value="Putative methyltransferase TM0872, insert domain"/>
    <property type="match status" value="1"/>
</dbReference>
<dbReference type="Gene3D" id="3.40.50.150">
    <property type="entry name" value="Vaccinia Virus protein VP39"/>
    <property type="match status" value="1"/>
</dbReference>
<dbReference type="HAMAP" id="MF_01007">
    <property type="entry name" value="16SrRNA_methyltr_H"/>
    <property type="match status" value="1"/>
</dbReference>
<dbReference type="InterPro" id="IPR002903">
    <property type="entry name" value="RsmH"/>
</dbReference>
<dbReference type="InterPro" id="IPR023397">
    <property type="entry name" value="SAM-dep_MeTrfase_MraW_recog"/>
</dbReference>
<dbReference type="InterPro" id="IPR029063">
    <property type="entry name" value="SAM-dependent_MTases_sf"/>
</dbReference>
<dbReference type="NCBIfam" id="TIGR00006">
    <property type="entry name" value="16S rRNA (cytosine(1402)-N(4))-methyltransferase RsmH"/>
    <property type="match status" value="1"/>
</dbReference>
<dbReference type="PANTHER" id="PTHR11265:SF0">
    <property type="entry name" value="12S RRNA N4-METHYLCYTIDINE METHYLTRANSFERASE"/>
    <property type="match status" value="1"/>
</dbReference>
<dbReference type="PANTHER" id="PTHR11265">
    <property type="entry name" value="S-ADENOSYL-METHYLTRANSFERASE MRAW"/>
    <property type="match status" value="1"/>
</dbReference>
<dbReference type="Pfam" id="PF01795">
    <property type="entry name" value="Methyltransf_5"/>
    <property type="match status" value="1"/>
</dbReference>
<dbReference type="PIRSF" id="PIRSF004486">
    <property type="entry name" value="MraW"/>
    <property type="match status" value="1"/>
</dbReference>
<dbReference type="SUPFAM" id="SSF81799">
    <property type="entry name" value="Putative methyltransferase TM0872, insert domain"/>
    <property type="match status" value="1"/>
</dbReference>
<dbReference type="SUPFAM" id="SSF53335">
    <property type="entry name" value="S-adenosyl-L-methionine-dependent methyltransferases"/>
    <property type="match status" value="1"/>
</dbReference>
<organism>
    <name type="scientific">Chloroflexus aurantiacus (strain ATCC 29364 / DSM 637 / Y-400-fl)</name>
    <dbReference type="NCBI Taxonomy" id="480224"/>
    <lineage>
        <taxon>Bacteria</taxon>
        <taxon>Bacillati</taxon>
        <taxon>Chloroflexota</taxon>
        <taxon>Chloroflexia</taxon>
        <taxon>Chloroflexales</taxon>
        <taxon>Chloroflexineae</taxon>
        <taxon>Chloroflexaceae</taxon>
        <taxon>Chloroflexus</taxon>
    </lineage>
</organism>
<name>RSMH_CHLSY</name>
<protein>
    <recommendedName>
        <fullName evidence="1">Ribosomal RNA small subunit methyltransferase H</fullName>
        <ecNumber evidence="1">2.1.1.199</ecNumber>
    </recommendedName>
    <alternativeName>
        <fullName evidence="1">16S rRNA m(4)C1402 methyltransferase</fullName>
    </alternativeName>
    <alternativeName>
        <fullName evidence="1">rRNA (cytosine-N(4)-)-methyltransferase RsmH</fullName>
    </alternativeName>
</protein>
<gene>
    <name evidence="1" type="primary">rsmH</name>
    <name type="synonym">mraW</name>
    <name type="ordered locus">Chy400_0827</name>
</gene>
<proteinExistence type="inferred from homology"/>
<feature type="chain" id="PRO_0000386802" description="Ribosomal RNA small subunit methyltransferase H">
    <location>
        <begin position="1"/>
        <end position="301"/>
    </location>
</feature>
<feature type="binding site" evidence="1">
    <location>
        <begin position="35"/>
        <end position="37"/>
    </location>
    <ligand>
        <name>S-adenosyl-L-methionine</name>
        <dbReference type="ChEBI" id="CHEBI:59789"/>
    </ligand>
</feature>
<feature type="binding site" evidence="1">
    <location>
        <position position="55"/>
    </location>
    <ligand>
        <name>S-adenosyl-L-methionine</name>
        <dbReference type="ChEBI" id="CHEBI:59789"/>
    </ligand>
</feature>
<feature type="binding site" evidence="1">
    <location>
        <position position="84"/>
    </location>
    <ligand>
        <name>S-adenosyl-L-methionine</name>
        <dbReference type="ChEBI" id="CHEBI:59789"/>
    </ligand>
</feature>
<feature type="binding site" evidence="1">
    <location>
        <position position="105"/>
    </location>
    <ligand>
        <name>S-adenosyl-L-methionine</name>
        <dbReference type="ChEBI" id="CHEBI:59789"/>
    </ligand>
</feature>
<feature type="binding site" evidence="1">
    <location>
        <position position="112"/>
    </location>
    <ligand>
        <name>S-adenosyl-L-methionine</name>
        <dbReference type="ChEBI" id="CHEBI:59789"/>
    </ligand>
</feature>
<sequence>MAVTFQHTPVLLTEVLTMLAPRPAGQYLDATVGGGGHALAVLQAAQPGGRLLGIDADPAALAATAARLQAAGLIEQAVLCHGSFADLATLAATAGFGAFDGILFDLGVSSYQLDTPERGFSFTADGPLDMRLDPTQGLTAADMVNRLSERELADIIFLYGEEHAARRIARAIVEHRRTQPFQRTAELAEVVARAVGGRHGRIHPATRTFQALRIAVNQELDRLRATLPQAVDLLAPGGRLAVISFHSLEDRIVKQFLRAEASGETPRLTIVTKKPIVPTAAEVANNPRARSAKLRVATRIG</sequence>
<reference key="1">
    <citation type="submission" date="2009-01" db="EMBL/GenBank/DDBJ databases">
        <title>Complete sequence of Chloroflexus sp. Y-400-fl.</title>
        <authorList>
            <consortium name="US DOE Joint Genome Institute"/>
            <person name="Lucas S."/>
            <person name="Copeland A."/>
            <person name="Lapidus A."/>
            <person name="Glavina del Rio T."/>
            <person name="Dalin E."/>
            <person name="Tice H."/>
            <person name="Bruce D."/>
            <person name="Goodwin L."/>
            <person name="Pitluck S."/>
            <person name="Sims D."/>
            <person name="Kiss H."/>
            <person name="Brettin T."/>
            <person name="Detter J.C."/>
            <person name="Han C."/>
            <person name="Larimer F."/>
            <person name="Land M."/>
            <person name="Hauser L."/>
            <person name="Kyrpides N."/>
            <person name="Ovchinnikova G."/>
            <person name="Bryant D.A."/>
            <person name="Richardson P."/>
        </authorList>
    </citation>
    <scope>NUCLEOTIDE SEQUENCE [LARGE SCALE GENOMIC DNA]</scope>
    <source>
        <strain>ATCC 29364 / DSM 637 / Y-400-fl</strain>
    </source>
</reference>